<sequence>MKKLKLHGFNNLTKSLSFCIYDICYAKTAEERDGYIAYIDELYNANRLTEILSETCSIIGANILNIARQDYEPQGASVTILVSEEPMDPKLIDQTEHPGPLPETVVAHLDKSHICVHTYPESHPEGGLCTFRADIEVSTCGVISPLKALNYLIHQLESDIVTIDYRVRGFTRDVNGMKHFIDHEINSIQNFMSEDMKSLYDMVDVNVYQENIFHTKMLLKEFDLKHYMFHTKPEDLTETERQEITAALWKEMREIYYGRNMPAV</sequence>
<protein>
    <recommendedName>
        <fullName evidence="1">S-adenosylmethionine decarboxylase proenzyme</fullName>
        <shortName evidence="1">AdoMetDC</shortName>
        <shortName evidence="1">SAMDC</shortName>
        <ecNumber evidence="1">4.1.1.50</ecNumber>
    </recommendedName>
    <component>
        <recommendedName>
            <fullName evidence="1">S-adenosylmethionine decarboxylase beta chain</fullName>
        </recommendedName>
    </component>
    <component>
        <recommendedName>
            <fullName evidence="1">S-adenosylmethionine decarboxylase alpha chain</fullName>
        </recommendedName>
    </component>
</protein>
<feature type="chain" id="PRO_1000081176" description="S-adenosylmethionine decarboxylase beta chain" evidence="1">
    <location>
        <begin position="1"/>
        <end position="111"/>
    </location>
</feature>
<feature type="chain" id="PRO_1000081177" description="S-adenosylmethionine decarboxylase alpha chain" evidence="1">
    <location>
        <begin position="112"/>
        <end position="264"/>
    </location>
</feature>
<feature type="active site" description="Schiff-base intermediate with substrate; via pyruvic acid" evidence="1">
    <location>
        <position position="112"/>
    </location>
</feature>
<feature type="active site" description="Proton acceptor; for processing activity" evidence="1">
    <location>
        <position position="117"/>
    </location>
</feature>
<feature type="active site" description="Proton donor; for catalytic activity" evidence="1">
    <location>
        <position position="140"/>
    </location>
</feature>
<feature type="site" description="Cleavage (non-hydrolytic); by autolysis" evidence="1">
    <location>
        <begin position="111"/>
        <end position="112"/>
    </location>
</feature>
<feature type="modified residue" description="Pyruvic acid (Ser); by autocatalysis" evidence="1">
    <location>
        <position position="112"/>
    </location>
</feature>
<evidence type="ECO:0000255" key="1">
    <source>
        <dbReference type="HAMAP-Rule" id="MF_00465"/>
    </source>
</evidence>
<dbReference type="EC" id="4.1.1.50" evidence="1"/>
<dbReference type="EMBL" id="CP000880">
    <property type="protein sequence ID" value="ABX22677.1"/>
    <property type="molecule type" value="Genomic_DNA"/>
</dbReference>
<dbReference type="STRING" id="41514.SARI_02829"/>
<dbReference type="KEGG" id="ses:SARI_02829"/>
<dbReference type="HOGENOM" id="CLU_092007_0_0_6"/>
<dbReference type="UniPathway" id="UPA00331">
    <property type="reaction ID" value="UER00451"/>
</dbReference>
<dbReference type="Proteomes" id="UP000002084">
    <property type="component" value="Chromosome"/>
</dbReference>
<dbReference type="GO" id="GO:0005829">
    <property type="term" value="C:cytosol"/>
    <property type="evidence" value="ECO:0007669"/>
    <property type="project" value="TreeGrafter"/>
</dbReference>
<dbReference type="GO" id="GO:0004014">
    <property type="term" value="F:adenosylmethionine decarboxylase activity"/>
    <property type="evidence" value="ECO:0007669"/>
    <property type="project" value="UniProtKB-UniRule"/>
</dbReference>
<dbReference type="GO" id="GO:0008295">
    <property type="term" value="P:spermidine biosynthetic process"/>
    <property type="evidence" value="ECO:0007669"/>
    <property type="project" value="UniProtKB-UniRule"/>
</dbReference>
<dbReference type="FunFam" id="3.60.90.10:FF:000001">
    <property type="entry name" value="S-adenosylmethionine decarboxylase proenzyme"/>
    <property type="match status" value="1"/>
</dbReference>
<dbReference type="Gene3D" id="3.60.90.10">
    <property type="entry name" value="S-adenosylmethionine decarboxylase"/>
    <property type="match status" value="1"/>
</dbReference>
<dbReference type="HAMAP" id="MF_00465">
    <property type="entry name" value="AdoMetDC_2"/>
    <property type="match status" value="1"/>
</dbReference>
<dbReference type="InterPro" id="IPR003826">
    <property type="entry name" value="AdoMetDC_fam_prok"/>
</dbReference>
<dbReference type="InterPro" id="IPR009165">
    <property type="entry name" value="S-AdoMet_deCO2ase_bac"/>
</dbReference>
<dbReference type="InterPro" id="IPR016067">
    <property type="entry name" value="S-AdoMet_deCO2ase_core"/>
</dbReference>
<dbReference type="NCBIfam" id="TIGR03331">
    <property type="entry name" value="SAM_DCase_Eco"/>
    <property type="match status" value="1"/>
</dbReference>
<dbReference type="PANTHER" id="PTHR33866">
    <property type="entry name" value="S-ADENOSYLMETHIONINE DECARBOXYLASE PROENZYME"/>
    <property type="match status" value="1"/>
</dbReference>
<dbReference type="PANTHER" id="PTHR33866:SF1">
    <property type="entry name" value="S-ADENOSYLMETHIONINE DECARBOXYLASE PROENZYME"/>
    <property type="match status" value="1"/>
</dbReference>
<dbReference type="Pfam" id="PF02675">
    <property type="entry name" value="AdoMet_dc"/>
    <property type="match status" value="1"/>
</dbReference>
<dbReference type="PIRSF" id="PIRSF001356">
    <property type="entry name" value="SAM_decarboxylas"/>
    <property type="match status" value="1"/>
</dbReference>
<dbReference type="SUPFAM" id="SSF56276">
    <property type="entry name" value="S-adenosylmethionine decarboxylase"/>
    <property type="match status" value="1"/>
</dbReference>
<name>SPED_SALAR</name>
<keyword id="KW-0068">Autocatalytic cleavage</keyword>
<keyword id="KW-0210">Decarboxylase</keyword>
<keyword id="KW-0456">Lyase</keyword>
<keyword id="KW-0620">Polyamine biosynthesis</keyword>
<keyword id="KW-0670">Pyruvate</keyword>
<keyword id="KW-1185">Reference proteome</keyword>
<keyword id="KW-0949">S-adenosyl-L-methionine</keyword>
<keyword id="KW-0704">Schiff base</keyword>
<keyword id="KW-0745">Spermidine biosynthesis</keyword>
<keyword id="KW-0865">Zymogen</keyword>
<organism>
    <name type="scientific">Salmonella arizonae (strain ATCC BAA-731 / CDC346-86 / RSK2980)</name>
    <dbReference type="NCBI Taxonomy" id="41514"/>
    <lineage>
        <taxon>Bacteria</taxon>
        <taxon>Pseudomonadati</taxon>
        <taxon>Pseudomonadota</taxon>
        <taxon>Gammaproteobacteria</taxon>
        <taxon>Enterobacterales</taxon>
        <taxon>Enterobacteriaceae</taxon>
        <taxon>Salmonella</taxon>
    </lineage>
</organism>
<proteinExistence type="inferred from homology"/>
<comment type="function">
    <text evidence="1">Catalyzes the decarboxylation of S-adenosylmethionine to S-adenosylmethioninamine (dcAdoMet), the propylamine donor required for the synthesis of the polyamines spermine and spermidine from the diamine putrescine.</text>
</comment>
<comment type="catalytic activity">
    <reaction evidence="1">
        <text>S-adenosyl-L-methionine + H(+) = S-adenosyl 3-(methylsulfanyl)propylamine + CO2</text>
        <dbReference type="Rhea" id="RHEA:15981"/>
        <dbReference type="ChEBI" id="CHEBI:15378"/>
        <dbReference type="ChEBI" id="CHEBI:16526"/>
        <dbReference type="ChEBI" id="CHEBI:57443"/>
        <dbReference type="ChEBI" id="CHEBI:59789"/>
        <dbReference type="EC" id="4.1.1.50"/>
    </reaction>
</comment>
<comment type="cofactor">
    <cofactor evidence="1">
        <name>pyruvate</name>
        <dbReference type="ChEBI" id="CHEBI:15361"/>
    </cofactor>
    <text evidence="1">Binds 1 pyruvoyl group covalently per subunit.</text>
</comment>
<comment type="pathway">
    <text evidence="1">Amine and polyamine biosynthesis; S-adenosylmethioninamine biosynthesis; S-adenosylmethioninamine from S-adenosyl-L-methionine: step 1/1.</text>
</comment>
<comment type="subunit">
    <text evidence="1">Heterooctamer of four alpha and four beta chains arranged as a tetramer of alpha/beta heterodimers.</text>
</comment>
<comment type="PTM">
    <text evidence="1">Is synthesized initially as an inactive proenzyme. Formation of the active enzyme involves a self-maturation process in which the active site pyruvoyl group is generated from an internal serine residue via an autocatalytic post-translational modification. Two non-identical subunits are generated from the proenzyme in this reaction, and the pyruvate is formed at the N-terminus of the alpha chain, which is derived from the carboxyl end of the proenzyme. The post-translation cleavage follows an unusual pathway, termed non-hydrolytic serinolysis, in which the side chain hydroxyl group of the serine supplies its oxygen atom to form the C-terminus of the beta chain, while the remainder of the serine residue undergoes an oxidative deamination to produce ammonia and the pyruvoyl group blocking the N-terminus of the alpha chain.</text>
</comment>
<comment type="similarity">
    <text evidence="1">Belongs to the prokaryotic AdoMetDC family. Type 2 subfamily.</text>
</comment>
<gene>
    <name evidence="1" type="primary">speD</name>
    <name type="ordered locus">SARI_02829</name>
</gene>
<reference key="1">
    <citation type="submission" date="2007-11" db="EMBL/GenBank/DDBJ databases">
        <authorList>
            <consortium name="The Salmonella enterica serovar Arizonae Genome Sequencing Project"/>
            <person name="McClelland M."/>
            <person name="Sanderson E.K."/>
            <person name="Porwollik S."/>
            <person name="Spieth J."/>
            <person name="Clifton W.S."/>
            <person name="Fulton R."/>
            <person name="Chunyan W."/>
            <person name="Wollam A."/>
            <person name="Shah N."/>
            <person name="Pepin K."/>
            <person name="Bhonagiri V."/>
            <person name="Nash W."/>
            <person name="Johnson M."/>
            <person name="Thiruvilangam P."/>
            <person name="Wilson R."/>
        </authorList>
    </citation>
    <scope>NUCLEOTIDE SEQUENCE [LARGE SCALE GENOMIC DNA]</scope>
    <source>
        <strain>ATCC BAA-731 / CDC346-86 / RSK2980</strain>
    </source>
</reference>
<accession>A9MPN4</accession>